<name>PLSY_CUPTR</name>
<feature type="chain" id="PRO_1000136078" description="Glycerol-3-phosphate acyltransferase">
    <location>
        <begin position="1"/>
        <end position="202"/>
    </location>
</feature>
<feature type="transmembrane region" description="Helical" evidence="1">
    <location>
        <begin position="2"/>
        <end position="22"/>
    </location>
</feature>
<feature type="transmembrane region" description="Helical" evidence="1">
    <location>
        <begin position="82"/>
        <end position="102"/>
    </location>
</feature>
<feature type="transmembrane region" description="Helical" evidence="1">
    <location>
        <begin position="119"/>
        <end position="139"/>
    </location>
</feature>
<feature type="transmembrane region" description="Helical" evidence="1">
    <location>
        <begin position="158"/>
        <end position="178"/>
    </location>
</feature>
<reference key="1">
    <citation type="journal article" date="2008" name="Genome Res.">
        <title>Genome sequence of the beta-rhizobium Cupriavidus taiwanensis and comparative genomics of rhizobia.</title>
        <authorList>
            <person name="Amadou C."/>
            <person name="Pascal G."/>
            <person name="Mangenot S."/>
            <person name="Glew M."/>
            <person name="Bontemps C."/>
            <person name="Capela D."/>
            <person name="Carrere S."/>
            <person name="Cruveiller S."/>
            <person name="Dossat C."/>
            <person name="Lajus A."/>
            <person name="Marchetti M."/>
            <person name="Poinsot V."/>
            <person name="Rouy Z."/>
            <person name="Servin B."/>
            <person name="Saad M."/>
            <person name="Schenowitz C."/>
            <person name="Barbe V."/>
            <person name="Batut J."/>
            <person name="Medigue C."/>
            <person name="Masson-Boivin C."/>
        </authorList>
    </citation>
    <scope>NUCLEOTIDE SEQUENCE [LARGE SCALE GENOMIC DNA]</scope>
    <source>
        <strain>DSM 17343 / BCRC 17206 / CCUG 44338 / CIP 107171 / LMG 19424 / R1</strain>
    </source>
</reference>
<proteinExistence type="inferred from homology"/>
<evidence type="ECO:0000255" key="1">
    <source>
        <dbReference type="HAMAP-Rule" id="MF_01043"/>
    </source>
</evidence>
<sequence>MANLLFALAAYLIGSVSFAVVVSKLMGLPDPHSYGSGNPGATNVLRTGNKKAAILTLIGDALKGWLAVWLAARFGPAHGLNDTGLAMVALAVFLGHLFPVFHRFAGGKGVATAAGILLAIDPILGLGTLATWLIIAFFFRYSSLAALVAAIFAPFFHVLMNGVDVMAGAIFVISVLLIARHRQNIAKLLAGKESRIGEKKKV</sequence>
<keyword id="KW-0997">Cell inner membrane</keyword>
<keyword id="KW-1003">Cell membrane</keyword>
<keyword id="KW-0444">Lipid biosynthesis</keyword>
<keyword id="KW-0443">Lipid metabolism</keyword>
<keyword id="KW-0472">Membrane</keyword>
<keyword id="KW-0594">Phospholipid biosynthesis</keyword>
<keyword id="KW-1208">Phospholipid metabolism</keyword>
<keyword id="KW-0808">Transferase</keyword>
<keyword id="KW-0812">Transmembrane</keyword>
<keyword id="KW-1133">Transmembrane helix</keyword>
<organism>
    <name type="scientific">Cupriavidus taiwanensis (strain DSM 17343 / BCRC 17206 / CCUG 44338 / CIP 107171 / LMG 19424 / R1)</name>
    <name type="common">Ralstonia taiwanensis (strain LMG 19424)</name>
    <dbReference type="NCBI Taxonomy" id="977880"/>
    <lineage>
        <taxon>Bacteria</taxon>
        <taxon>Pseudomonadati</taxon>
        <taxon>Pseudomonadota</taxon>
        <taxon>Betaproteobacteria</taxon>
        <taxon>Burkholderiales</taxon>
        <taxon>Burkholderiaceae</taxon>
        <taxon>Cupriavidus</taxon>
    </lineage>
</organism>
<dbReference type="EC" id="2.3.1.275" evidence="1"/>
<dbReference type="EMBL" id="CU633749">
    <property type="protein sequence ID" value="CAQ68528.1"/>
    <property type="molecule type" value="Genomic_DNA"/>
</dbReference>
<dbReference type="RefSeq" id="WP_012351869.1">
    <property type="nucleotide sequence ID" value="NC_010528.1"/>
</dbReference>
<dbReference type="SMR" id="B3R0V4"/>
<dbReference type="GeneID" id="29761941"/>
<dbReference type="KEGG" id="cti:RALTA_A0543"/>
<dbReference type="eggNOG" id="COG0344">
    <property type="taxonomic scope" value="Bacteria"/>
</dbReference>
<dbReference type="HOGENOM" id="CLU_081254_0_0_4"/>
<dbReference type="BioCyc" id="CTAI977880:RALTA_RS02660-MONOMER"/>
<dbReference type="UniPathway" id="UPA00085"/>
<dbReference type="Proteomes" id="UP000001692">
    <property type="component" value="Chromosome 1"/>
</dbReference>
<dbReference type="GO" id="GO:0005886">
    <property type="term" value="C:plasma membrane"/>
    <property type="evidence" value="ECO:0007669"/>
    <property type="project" value="UniProtKB-SubCell"/>
</dbReference>
<dbReference type="GO" id="GO:0043772">
    <property type="term" value="F:acyl-phosphate glycerol-3-phosphate acyltransferase activity"/>
    <property type="evidence" value="ECO:0007669"/>
    <property type="project" value="UniProtKB-UniRule"/>
</dbReference>
<dbReference type="GO" id="GO:0008654">
    <property type="term" value="P:phospholipid biosynthetic process"/>
    <property type="evidence" value="ECO:0007669"/>
    <property type="project" value="UniProtKB-UniRule"/>
</dbReference>
<dbReference type="HAMAP" id="MF_01043">
    <property type="entry name" value="PlsY"/>
    <property type="match status" value="1"/>
</dbReference>
<dbReference type="InterPro" id="IPR003811">
    <property type="entry name" value="G3P_acylTferase_PlsY"/>
</dbReference>
<dbReference type="NCBIfam" id="TIGR00023">
    <property type="entry name" value="glycerol-3-phosphate 1-O-acyltransferase PlsY"/>
    <property type="match status" value="1"/>
</dbReference>
<dbReference type="PANTHER" id="PTHR30309:SF0">
    <property type="entry name" value="GLYCEROL-3-PHOSPHATE ACYLTRANSFERASE-RELATED"/>
    <property type="match status" value="1"/>
</dbReference>
<dbReference type="PANTHER" id="PTHR30309">
    <property type="entry name" value="INNER MEMBRANE PROTEIN YGIH"/>
    <property type="match status" value="1"/>
</dbReference>
<dbReference type="Pfam" id="PF02660">
    <property type="entry name" value="G3P_acyltransf"/>
    <property type="match status" value="1"/>
</dbReference>
<dbReference type="SMART" id="SM01207">
    <property type="entry name" value="G3P_acyltransf"/>
    <property type="match status" value="1"/>
</dbReference>
<protein>
    <recommendedName>
        <fullName evidence="1">Glycerol-3-phosphate acyltransferase</fullName>
    </recommendedName>
    <alternativeName>
        <fullName evidence="1">Acyl-PO4 G3P acyltransferase</fullName>
    </alternativeName>
    <alternativeName>
        <fullName evidence="1">Acyl-phosphate--glycerol-3-phosphate acyltransferase</fullName>
    </alternativeName>
    <alternativeName>
        <fullName evidence="1">G3P acyltransferase</fullName>
        <shortName evidence="1">GPAT</shortName>
        <ecNumber evidence="1">2.3.1.275</ecNumber>
    </alternativeName>
    <alternativeName>
        <fullName evidence="1">Lysophosphatidic acid synthase</fullName>
        <shortName evidence="1">LPA synthase</shortName>
    </alternativeName>
</protein>
<accession>B3R0V4</accession>
<gene>
    <name evidence="1" type="primary">plsY</name>
    <name type="ordered locus">RALTA_A0543</name>
</gene>
<comment type="function">
    <text evidence="1">Catalyzes the transfer of an acyl group from acyl-phosphate (acyl-PO(4)) to glycerol-3-phosphate (G3P) to form lysophosphatidic acid (LPA). This enzyme utilizes acyl-phosphate as fatty acyl donor, but not acyl-CoA or acyl-ACP.</text>
</comment>
<comment type="catalytic activity">
    <reaction evidence="1">
        <text>an acyl phosphate + sn-glycerol 3-phosphate = a 1-acyl-sn-glycero-3-phosphate + phosphate</text>
        <dbReference type="Rhea" id="RHEA:34075"/>
        <dbReference type="ChEBI" id="CHEBI:43474"/>
        <dbReference type="ChEBI" id="CHEBI:57597"/>
        <dbReference type="ChEBI" id="CHEBI:57970"/>
        <dbReference type="ChEBI" id="CHEBI:59918"/>
        <dbReference type="EC" id="2.3.1.275"/>
    </reaction>
</comment>
<comment type="pathway">
    <text evidence="1">Lipid metabolism; phospholipid metabolism.</text>
</comment>
<comment type="subunit">
    <text evidence="1">Probably interacts with PlsX.</text>
</comment>
<comment type="subcellular location">
    <subcellularLocation>
        <location evidence="1">Cell inner membrane</location>
        <topology evidence="1">Multi-pass membrane protein</topology>
    </subcellularLocation>
</comment>
<comment type="similarity">
    <text evidence="1">Belongs to the PlsY family.</text>
</comment>